<protein>
    <recommendedName>
        <fullName evidence="1">Fatty acid oxidation complex subunit alpha</fullName>
    </recommendedName>
    <domain>
        <recommendedName>
            <fullName evidence="1">Enoyl-CoA hydratase/3-hydroxybutyryl-CoA epimerase</fullName>
            <ecNumber evidence="1">4.2.1.17</ecNumber>
            <ecNumber evidence="1">5.1.2.3</ecNumber>
        </recommendedName>
    </domain>
    <domain>
        <recommendedName>
            <fullName evidence="1">3-hydroxyacyl-CoA dehydrogenase</fullName>
            <ecNumber evidence="1">1.1.1.35</ecNumber>
        </recommendedName>
    </domain>
</protein>
<proteinExistence type="inferred from homology"/>
<gene>
    <name evidence="1" type="primary">fadJ</name>
    <name type="ordered locus">EcSMS35_2500</name>
</gene>
<sequence>MEMASAFTLNVRLDNIAIITIDVPGEKMNTLKAEFASQVRAIIKQLRENKELRGVVFVSAKPDNFIAGADINMIGNCKTAQEAEVLARQGQQLMAEIHALPVPVIAAIHGACLGGGLELALACHGRVCTDDAKTVLGLPEVQLGLLPGSGGTQRLPRLIGVSTALEMILTGKQLRAKQALKLGLVDDVVPQSILLEAAVELAKQDRPSSRPLPVRERILAGPLGRALLFKMVGKKTEHKTQGNYPATERILEVVETGLAQGTSSGYDAEARAFGELAMTPQSQALRNIFFASTEVKKDSGSDAPPAPLNSVGILGGGLMGGGIAYVTACKAGLSVRIKDINPQGINHALKYSWDQLEGKVRRRHLKASERDKQLALISGTTDYCGFAHRDLIIEAVFENLELKQQMVAEVEQNCATHTIFASNTSSLPIGDIAAHAARPEQVIGLHFFSPVEKMPLVEIIPHASTSAQTIATTVKLAKKQGKTPIVVRDKAGFYVNRILAPYINEAIRMLTEGERIEHIDAALVKFGFPVGPIQLLDEVGIDTGTKIIPVLEAAYGERFSAPANVVSSILNDDRKGRKNGRGFYLYGQKGRKSKKQVDPAIYPLIGAQGQGRLSAPQVAERCVMLMLNEAVRCLDEQVIRSVRDGDIGAVFGIGFPPFLGGPFRYIDSLGAGEVVAIMQRLATQYGSRFTPCERLVEMSKRGESFWKTTATDLQ</sequence>
<organism>
    <name type="scientific">Escherichia coli (strain SMS-3-5 / SECEC)</name>
    <dbReference type="NCBI Taxonomy" id="439855"/>
    <lineage>
        <taxon>Bacteria</taxon>
        <taxon>Pseudomonadati</taxon>
        <taxon>Pseudomonadota</taxon>
        <taxon>Gammaproteobacteria</taxon>
        <taxon>Enterobacterales</taxon>
        <taxon>Enterobacteriaceae</taxon>
        <taxon>Escherichia</taxon>
    </lineage>
</organism>
<reference key="1">
    <citation type="journal article" date="2008" name="J. Bacteriol.">
        <title>Insights into the environmental resistance gene pool from the genome sequence of the multidrug-resistant environmental isolate Escherichia coli SMS-3-5.</title>
        <authorList>
            <person name="Fricke W.F."/>
            <person name="Wright M.S."/>
            <person name="Lindell A.H."/>
            <person name="Harkins D.M."/>
            <person name="Baker-Austin C."/>
            <person name="Ravel J."/>
            <person name="Stepanauskas R."/>
        </authorList>
    </citation>
    <scope>NUCLEOTIDE SEQUENCE [LARGE SCALE GENOMIC DNA]</scope>
    <source>
        <strain>SMS-3-5 / SECEC</strain>
    </source>
</reference>
<comment type="function">
    <text evidence="1">Catalyzes the formation of a hydroxyacyl-CoA by addition of water on enoyl-CoA. Also exhibits 3-hydroxyacyl-CoA epimerase and 3-hydroxyacyl-CoA dehydrogenase activities.</text>
</comment>
<comment type="catalytic activity">
    <reaction evidence="1">
        <text>a (3S)-3-hydroxyacyl-CoA = a (2E)-enoyl-CoA + H2O</text>
        <dbReference type="Rhea" id="RHEA:16105"/>
        <dbReference type="ChEBI" id="CHEBI:15377"/>
        <dbReference type="ChEBI" id="CHEBI:57318"/>
        <dbReference type="ChEBI" id="CHEBI:58856"/>
        <dbReference type="EC" id="4.2.1.17"/>
    </reaction>
</comment>
<comment type="catalytic activity">
    <reaction evidence="1">
        <text>a 4-saturated-(3S)-3-hydroxyacyl-CoA = a (3E)-enoyl-CoA + H2O</text>
        <dbReference type="Rhea" id="RHEA:20724"/>
        <dbReference type="ChEBI" id="CHEBI:15377"/>
        <dbReference type="ChEBI" id="CHEBI:58521"/>
        <dbReference type="ChEBI" id="CHEBI:137480"/>
        <dbReference type="EC" id="4.2.1.17"/>
    </reaction>
</comment>
<comment type="catalytic activity">
    <reaction evidence="1">
        <text>a (3S)-3-hydroxyacyl-CoA + NAD(+) = a 3-oxoacyl-CoA + NADH + H(+)</text>
        <dbReference type="Rhea" id="RHEA:22432"/>
        <dbReference type="ChEBI" id="CHEBI:15378"/>
        <dbReference type="ChEBI" id="CHEBI:57318"/>
        <dbReference type="ChEBI" id="CHEBI:57540"/>
        <dbReference type="ChEBI" id="CHEBI:57945"/>
        <dbReference type="ChEBI" id="CHEBI:90726"/>
        <dbReference type="EC" id="1.1.1.35"/>
    </reaction>
</comment>
<comment type="catalytic activity">
    <reaction evidence="1">
        <text>(3S)-3-hydroxybutanoyl-CoA = (3R)-3-hydroxybutanoyl-CoA</text>
        <dbReference type="Rhea" id="RHEA:21760"/>
        <dbReference type="ChEBI" id="CHEBI:57315"/>
        <dbReference type="ChEBI" id="CHEBI:57316"/>
        <dbReference type="EC" id="5.1.2.3"/>
    </reaction>
</comment>
<comment type="pathway">
    <text evidence="1">Lipid metabolism; fatty acid beta-oxidation.</text>
</comment>
<comment type="subunit">
    <text evidence="1">Heterotetramer of two alpha chains (FadJ) and two beta chains (FadI).</text>
</comment>
<comment type="subcellular location">
    <subcellularLocation>
        <location evidence="1">Cytoplasm</location>
    </subcellularLocation>
</comment>
<comment type="similarity">
    <text evidence="1">In the N-terminal section; belongs to the enoyl-CoA hydratase/isomerase family.</text>
</comment>
<comment type="similarity">
    <text evidence="1">In the central section; belongs to the 3-hydroxyacyl-CoA dehydrogenase family.</text>
</comment>
<name>FADJ_ECOSM</name>
<dbReference type="EC" id="4.2.1.17" evidence="1"/>
<dbReference type="EC" id="5.1.2.3" evidence="1"/>
<dbReference type="EC" id="1.1.1.35" evidence="1"/>
<dbReference type="EMBL" id="CP000970">
    <property type="protein sequence ID" value="ACB18415.1"/>
    <property type="molecule type" value="Genomic_DNA"/>
</dbReference>
<dbReference type="RefSeq" id="WP_000425025.1">
    <property type="nucleotide sequence ID" value="NC_010498.1"/>
</dbReference>
<dbReference type="SMR" id="B1LME7"/>
<dbReference type="KEGG" id="ecm:EcSMS35_2500"/>
<dbReference type="HOGENOM" id="CLU_009834_16_1_6"/>
<dbReference type="UniPathway" id="UPA00659"/>
<dbReference type="Proteomes" id="UP000007011">
    <property type="component" value="Chromosome"/>
</dbReference>
<dbReference type="GO" id="GO:0005737">
    <property type="term" value="C:cytoplasm"/>
    <property type="evidence" value="ECO:0007669"/>
    <property type="project" value="UniProtKB-SubCell"/>
</dbReference>
<dbReference type="GO" id="GO:0008692">
    <property type="term" value="F:3-hydroxybutyryl-CoA epimerase activity"/>
    <property type="evidence" value="ECO:0007669"/>
    <property type="project" value="UniProtKB-UniRule"/>
</dbReference>
<dbReference type="GO" id="GO:0004300">
    <property type="term" value="F:enoyl-CoA hydratase activity"/>
    <property type="evidence" value="ECO:0007669"/>
    <property type="project" value="UniProtKB-UniRule"/>
</dbReference>
<dbReference type="GO" id="GO:0016509">
    <property type="term" value="F:long-chain-3-hydroxyacyl-CoA dehydrogenase activity"/>
    <property type="evidence" value="ECO:0007669"/>
    <property type="project" value="TreeGrafter"/>
</dbReference>
<dbReference type="GO" id="GO:0070403">
    <property type="term" value="F:NAD+ binding"/>
    <property type="evidence" value="ECO:0007669"/>
    <property type="project" value="InterPro"/>
</dbReference>
<dbReference type="GO" id="GO:0006635">
    <property type="term" value="P:fatty acid beta-oxidation"/>
    <property type="evidence" value="ECO:0007669"/>
    <property type="project" value="UniProtKB-UniRule"/>
</dbReference>
<dbReference type="CDD" id="cd06558">
    <property type="entry name" value="crotonase-like"/>
    <property type="match status" value="1"/>
</dbReference>
<dbReference type="FunFam" id="1.10.1040.50:FF:000003">
    <property type="entry name" value="Fatty acid oxidation complex subunit alpha"/>
    <property type="match status" value="1"/>
</dbReference>
<dbReference type="FunFam" id="3.90.226.10:FF:000011">
    <property type="entry name" value="Fatty acid oxidation complex subunit alpha"/>
    <property type="match status" value="1"/>
</dbReference>
<dbReference type="FunFam" id="3.40.50.720:FF:000009">
    <property type="entry name" value="Fatty oxidation complex, alpha subunit"/>
    <property type="match status" value="1"/>
</dbReference>
<dbReference type="Gene3D" id="1.10.1040.50">
    <property type="match status" value="1"/>
</dbReference>
<dbReference type="Gene3D" id="3.90.226.10">
    <property type="entry name" value="2-enoyl-CoA Hydratase, Chain A, domain 1"/>
    <property type="match status" value="1"/>
</dbReference>
<dbReference type="Gene3D" id="3.40.50.720">
    <property type="entry name" value="NAD(P)-binding Rossmann-like Domain"/>
    <property type="match status" value="1"/>
</dbReference>
<dbReference type="HAMAP" id="MF_01617">
    <property type="entry name" value="FadJ"/>
    <property type="match status" value="1"/>
</dbReference>
<dbReference type="InterPro" id="IPR006180">
    <property type="entry name" value="3-OHacyl-CoA_DH_CS"/>
</dbReference>
<dbReference type="InterPro" id="IPR006176">
    <property type="entry name" value="3-OHacyl-CoA_DH_NAD-bd"/>
</dbReference>
<dbReference type="InterPro" id="IPR006108">
    <property type="entry name" value="3HC_DH_C"/>
</dbReference>
<dbReference type="InterPro" id="IPR008927">
    <property type="entry name" value="6-PGluconate_DH-like_C_sf"/>
</dbReference>
<dbReference type="InterPro" id="IPR029045">
    <property type="entry name" value="ClpP/crotonase-like_dom_sf"/>
</dbReference>
<dbReference type="InterPro" id="IPR001753">
    <property type="entry name" value="Enoyl-CoA_hydra/iso"/>
</dbReference>
<dbReference type="InterPro" id="IPR050136">
    <property type="entry name" value="FA_oxidation_alpha_subunit"/>
</dbReference>
<dbReference type="InterPro" id="IPR012802">
    <property type="entry name" value="FadJ"/>
</dbReference>
<dbReference type="InterPro" id="IPR036291">
    <property type="entry name" value="NAD(P)-bd_dom_sf"/>
</dbReference>
<dbReference type="NCBIfam" id="TIGR02440">
    <property type="entry name" value="FadJ"/>
    <property type="match status" value="1"/>
</dbReference>
<dbReference type="NCBIfam" id="NF008363">
    <property type="entry name" value="PRK11154.1"/>
    <property type="match status" value="1"/>
</dbReference>
<dbReference type="PANTHER" id="PTHR43612">
    <property type="entry name" value="TRIFUNCTIONAL ENZYME SUBUNIT ALPHA"/>
    <property type="match status" value="1"/>
</dbReference>
<dbReference type="PANTHER" id="PTHR43612:SF3">
    <property type="entry name" value="TRIFUNCTIONAL ENZYME SUBUNIT ALPHA, MITOCHONDRIAL"/>
    <property type="match status" value="1"/>
</dbReference>
<dbReference type="Pfam" id="PF00725">
    <property type="entry name" value="3HCDH"/>
    <property type="match status" value="2"/>
</dbReference>
<dbReference type="Pfam" id="PF02737">
    <property type="entry name" value="3HCDH_N"/>
    <property type="match status" value="1"/>
</dbReference>
<dbReference type="Pfam" id="PF00378">
    <property type="entry name" value="ECH_1"/>
    <property type="match status" value="1"/>
</dbReference>
<dbReference type="SUPFAM" id="SSF48179">
    <property type="entry name" value="6-phosphogluconate dehydrogenase C-terminal domain-like"/>
    <property type="match status" value="2"/>
</dbReference>
<dbReference type="SUPFAM" id="SSF52096">
    <property type="entry name" value="ClpP/crotonase"/>
    <property type="match status" value="1"/>
</dbReference>
<dbReference type="SUPFAM" id="SSF51735">
    <property type="entry name" value="NAD(P)-binding Rossmann-fold domains"/>
    <property type="match status" value="1"/>
</dbReference>
<dbReference type="PROSITE" id="PS00067">
    <property type="entry name" value="3HCDH"/>
    <property type="match status" value="1"/>
</dbReference>
<accession>B1LME7</accession>
<feature type="chain" id="PRO_1000185944" description="Fatty acid oxidation complex subunit alpha">
    <location>
        <begin position="1"/>
        <end position="714"/>
    </location>
</feature>
<feature type="region of interest" description="Enoyl-CoA hydratase" evidence="1">
    <location>
        <begin position="1"/>
        <end position="190"/>
    </location>
</feature>
<feature type="region of interest" description="3-hydroxyacyl-CoA dehydrogenase" evidence="1">
    <location>
        <begin position="306"/>
        <end position="714"/>
    </location>
</feature>
<feature type="site" description="Important for catalytic activity" evidence="1">
    <location>
        <position position="118"/>
    </location>
</feature>
<feature type="site" description="Important for catalytic activity" evidence="1">
    <location>
        <position position="140"/>
    </location>
</feature>
<evidence type="ECO:0000255" key="1">
    <source>
        <dbReference type="HAMAP-Rule" id="MF_01617"/>
    </source>
</evidence>
<keyword id="KW-0963">Cytoplasm</keyword>
<keyword id="KW-0276">Fatty acid metabolism</keyword>
<keyword id="KW-0413">Isomerase</keyword>
<keyword id="KW-0442">Lipid degradation</keyword>
<keyword id="KW-0443">Lipid metabolism</keyword>
<keyword id="KW-0456">Lyase</keyword>
<keyword id="KW-0511">Multifunctional enzyme</keyword>
<keyword id="KW-0520">NAD</keyword>
<keyword id="KW-0560">Oxidoreductase</keyword>